<keyword id="KW-0004">4Fe-4S</keyword>
<keyword id="KW-0249">Electron transport</keyword>
<keyword id="KW-0408">Iron</keyword>
<keyword id="KW-0411">Iron-sulfur</keyword>
<keyword id="KW-0479">Metal-binding</keyword>
<keyword id="KW-0500">Molybdenum</keyword>
<keyword id="KW-0534">Nitrate assimilation</keyword>
<keyword id="KW-0560">Oxidoreductase</keyword>
<keyword id="KW-0574">Periplasm</keyword>
<keyword id="KW-0732">Signal</keyword>
<keyword id="KW-0813">Transport</keyword>
<organism>
    <name type="scientific">Escherichia coli (strain K12 / MC4100 / BW2952)</name>
    <dbReference type="NCBI Taxonomy" id="595496"/>
    <lineage>
        <taxon>Bacteria</taxon>
        <taxon>Pseudomonadati</taxon>
        <taxon>Pseudomonadota</taxon>
        <taxon>Gammaproteobacteria</taxon>
        <taxon>Enterobacterales</taxon>
        <taxon>Enterobacteriaceae</taxon>
        <taxon>Escherichia</taxon>
    </lineage>
</organism>
<gene>
    <name evidence="1" type="primary">napA</name>
    <name type="ordered locus">BWG_1979</name>
</gene>
<comment type="function">
    <text evidence="1">Catalytic subunit of the periplasmic nitrate reductase complex NapAB. Receives electrons from NapB and catalyzes the reduction of nitrate to nitrite.</text>
</comment>
<comment type="catalytic activity">
    <reaction evidence="1">
        <text>2 Fe(II)-[cytochrome] + nitrate + 2 H(+) = 2 Fe(III)-[cytochrome] + nitrite + H2O</text>
        <dbReference type="Rhea" id="RHEA:12909"/>
        <dbReference type="Rhea" id="RHEA-COMP:11777"/>
        <dbReference type="Rhea" id="RHEA-COMP:11778"/>
        <dbReference type="ChEBI" id="CHEBI:15377"/>
        <dbReference type="ChEBI" id="CHEBI:15378"/>
        <dbReference type="ChEBI" id="CHEBI:16301"/>
        <dbReference type="ChEBI" id="CHEBI:17632"/>
        <dbReference type="ChEBI" id="CHEBI:29033"/>
        <dbReference type="ChEBI" id="CHEBI:29034"/>
        <dbReference type="EC" id="1.9.6.1"/>
    </reaction>
</comment>
<comment type="cofactor">
    <cofactor evidence="1">
        <name>[4Fe-4S] cluster</name>
        <dbReference type="ChEBI" id="CHEBI:49883"/>
    </cofactor>
    <text evidence="1">Binds 1 [4Fe-4S] cluster.</text>
</comment>
<comment type="cofactor">
    <cofactor evidence="1">
        <name>Mo-bis(molybdopterin guanine dinucleotide)</name>
        <dbReference type="ChEBI" id="CHEBI:60539"/>
    </cofactor>
    <text evidence="1">Binds 1 molybdenum-bis(molybdopterin guanine dinucleotide) (Mo-bis-MGD) cofactor per subunit.</text>
</comment>
<comment type="subunit">
    <text evidence="1">Component of the periplasmic nitrate reductase NapAB complex composed of NapA and NapB.</text>
</comment>
<comment type="subcellular location">
    <subcellularLocation>
        <location evidence="1">Periplasm</location>
    </subcellularLocation>
</comment>
<comment type="PTM">
    <text evidence="1">Predicted to be exported by the Tat system. The position of the signal peptide cleavage has not been experimentally proven.</text>
</comment>
<comment type="similarity">
    <text evidence="1">Belongs to the prokaryotic molybdopterin-containing oxidoreductase family. NasA/NapA/NarB subfamily.</text>
</comment>
<dbReference type="EC" id="1.9.6.1" evidence="1"/>
<dbReference type="EMBL" id="CP001396">
    <property type="protein sequence ID" value="ACR63904.1"/>
    <property type="molecule type" value="Genomic_DNA"/>
</dbReference>
<dbReference type="RefSeq" id="WP_000778061.1">
    <property type="nucleotide sequence ID" value="NC_012759.1"/>
</dbReference>
<dbReference type="SMR" id="C4ZU48"/>
<dbReference type="KEGG" id="ebw:BWG_1979"/>
<dbReference type="HOGENOM" id="CLU_000422_13_4_6"/>
<dbReference type="GO" id="GO:0016020">
    <property type="term" value="C:membrane"/>
    <property type="evidence" value="ECO:0007669"/>
    <property type="project" value="TreeGrafter"/>
</dbReference>
<dbReference type="GO" id="GO:0009325">
    <property type="term" value="C:nitrate reductase complex"/>
    <property type="evidence" value="ECO:0007669"/>
    <property type="project" value="TreeGrafter"/>
</dbReference>
<dbReference type="GO" id="GO:0042597">
    <property type="term" value="C:periplasmic space"/>
    <property type="evidence" value="ECO:0007669"/>
    <property type="project" value="UniProtKB-SubCell"/>
</dbReference>
<dbReference type="GO" id="GO:0051539">
    <property type="term" value="F:4 iron, 4 sulfur cluster binding"/>
    <property type="evidence" value="ECO:0007669"/>
    <property type="project" value="UniProtKB-KW"/>
</dbReference>
<dbReference type="GO" id="GO:0009055">
    <property type="term" value="F:electron transfer activity"/>
    <property type="evidence" value="ECO:0007669"/>
    <property type="project" value="UniProtKB-UniRule"/>
</dbReference>
<dbReference type="GO" id="GO:0005506">
    <property type="term" value="F:iron ion binding"/>
    <property type="evidence" value="ECO:0007669"/>
    <property type="project" value="UniProtKB-UniRule"/>
</dbReference>
<dbReference type="GO" id="GO:0030151">
    <property type="term" value="F:molybdenum ion binding"/>
    <property type="evidence" value="ECO:0007669"/>
    <property type="project" value="InterPro"/>
</dbReference>
<dbReference type="GO" id="GO:0043546">
    <property type="term" value="F:molybdopterin cofactor binding"/>
    <property type="evidence" value="ECO:0007669"/>
    <property type="project" value="InterPro"/>
</dbReference>
<dbReference type="GO" id="GO:0050140">
    <property type="term" value="F:nitrate reductase (cytochrome) activity"/>
    <property type="evidence" value="ECO:0007669"/>
    <property type="project" value="UniProtKB-EC"/>
</dbReference>
<dbReference type="GO" id="GO:0045333">
    <property type="term" value="P:cellular respiration"/>
    <property type="evidence" value="ECO:0007669"/>
    <property type="project" value="UniProtKB-ARBA"/>
</dbReference>
<dbReference type="GO" id="GO:0006777">
    <property type="term" value="P:Mo-molybdopterin cofactor biosynthetic process"/>
    <property type="evidence" value="ECO:0007669"/>
    <property type="project" value="UniProtKB-UniRule"/>
</dbReference>
<dbReference type="GO" id="GO:0042128">
    <property type="term" value="P:nitrate assimilation"/>
    <property type="evidence" value="ECO:0007669"/>
    <property type="project" value="UniProtKB-UniRule"/>
</dbReference>
<dbReference type="CDD" id="cd02791">
    <property type="entry name" value="MopB_CT_Nitrate-R-NapA-like"/>
    <property type="match status" value="1"/>
</dbReference>
<dbReference type="CDD" id="cd02754">
    <property type="entry name" value="MopB_Nitrate-R-NapA-like"/>
    <property type="match status" value="1"/>
</dbReference>
<dbReference type="FunFam" id="2.40.40.20:FF:000005">
    <property type="entry name" value="Periplasmic nitrate reductase"/>
    <property type="match status" value="1"/>
</dbReference>
<dbReference type="FunFam" id="3.40.228.10:FF:000001">
    <property type="entry name" value="Periplasmic nitrate reductase"/>
    <property type="match status" value="1"/>
</dbReference>
<dbReference type="Gene3D" id="2.40.40.20">
    <property type="match status" value="1"/>
</dbReference>
<dbReference type="Gene3D" id="3.30.200.210">
    <property type="match status" value="1"/>
</dbReference>
<dbReference type="Gene3D" id="3.40.50.740">
    <property type="match status" value="1"/>
</dbReference>
<dbReference type="Gene3D" id="3.40.228.10">
    <property type="entry name" value="Dimethylsulfoxide Reductase, domain 2"/>
    <property type="match status" value="1"/>
</dbReference>
<dbReference type="HAMAP" id="MF_01630">
    <property type="entry name" value="Nitrate_reduct_NapA"/>
    <property type="match status" value="1"/>
</dbReference>
<dbReference type="InterPro" id="IPR009010">
    <property type="entry name" value="Asp_de-COase-like_dom_sf"/>
</dbReference>
<dbReference type="InterPro" id="IPR041957">
    <property type="entry name" value="CT_Nitrate-R-NapA-like"/>
</dbReference>
<dbReference type="InterPro" id="IPR006657">
    <property type="entry name" value="MoPterin_dinucl-bd_dom"/>
</dbReference>
<dbReference type="InterPro" id="IPR006656">
    <property type="entry name" value="Mopterin_OxRdtase"/>
</dbReference>
<dbReference type="InterPro" id="IPR006963">
    <property type="entry name" value="Mopterin_OxRdtase_4Fe-4S_dom"/>
</dbReference>
<dbReference type="InterPro" id="IPR027467">
    <property type="entry name" value="MopterinOxRdtase_cofactor_BS"/>
</dbReference>
<dbReference type="InterPro" id="IPR010051">
    <property type="entry name" value="Periplasm_NO3_reductase_lsu"/>
</dbReference>
<dbReference type="InterPro" id="IPR050123">
    <property type="entry name" value="Prok_molybdopt-oxidoreductase"/>
</dbReference>
<dbReference type="InterPro" id="IPR006311">
    <property type="entry name" value="TAT_signal"/>
</dbReference>
<dbReference type="InterPro" id="IPR019546">
    <property type="entry name" value="TAT_signal_bac_arc"/>
</dbReference>
<dbReference type="NCBIfam" id="TIGR01706">
    <property type="entry name" value="NAPA"/>
    <property type="match status" value="1"/>
</dbReference>
<dbReference type="NCBIfam" id="NF010055">
    <property type="entry name" value="PRK13532.1"/>
    <property type="match status" value="1"/>
</dbReference>
<dbReference type="NCBIfam" id="TIGR01409">
    <property type="entry name" value="TAT_signal_seq"/>
    <property type="match status" value="1"/>
</dbReference>
<dbReference type="PANTHER" id="PTHR43105:SF11">
    <property type="entry name" value="PERIPLASMIC NITRATE REDUCTASE"/>
    <property type="match status" value="1"/>
</dbReference>
<dbReference type="PANTHER" id="PTHR43105">
    <property type="entry name" value="RESPIRATORY NITRATE REDUCTASE"/>
    <property type="match status" value="1"/>
</dbReference>
<dbReference type="Pfam" id="PF04879">
    <property type="entry name" value="Molybdop_Fe4S4"/>
    <property type="match status" value="1"/>
</dbReference>
<dbReference type="Pfam" id="PF00384">
    <property type="entry name" value="Molybdopterin"/>
    <property type="match status" value="1"/>
</dbReference>
<dbReference type="Pfam" id="PF01568">
    <property type="entry name" value="Molydop_binding"/>
    <property type="match status" value="1"/>
</dbReference>
<dbReference type="SMART" id="SM00926">
    <property type="entry name" value="Molybdop_Fe4S4"/>
    <property type="match status" value="1"/>
</dbReference>
<dbReference type="SUPFAM" id="SSF50692">
    <property type="entry name" value="ADC-like"/>
    <property type="match status" value="1"/>
</dbReference>
<dbReference type="SUPFAM" id="SSF53706">
    <property type="entry name" value="Formate dehydrogenase/DMSO reductase, domains 1-3"/>
    <property type="match status" value="1"/>
</dbReference>
<dbReference type="PROSITE" id="PS51669">
    <property type="entry name" value="4FE4S_MOW_BIS_MGD"/>
    <property type="match status" value="1"/>
</dbReference>
<dbReference type="PROSITE" id="PS00551">
    <property type="entry name" value="MOLYBDOPTERIN_PROK_1"/>
    <property type="match status" value="1"/>
</dbReference>
<dbReference type="PROSITE" id="PS51318">
    <property type="entry name" value="TAT"/>
    <property type="match status" value="1"/>
</dbReference>
<name>NAPA_ECOBW</name>
<accession>C4ZU48</accession>
<protein>
    <recommendedName>
        <fullName evidence="1">Periplasmic nitrate reductase</fullName>
        <ecNumber evidence="1">1.9.6.1</ecNumber>
    </recommendedName>
</protein>
<evidence type="ECO:0000255" key="1">
    <source>
        <dbReference type="HAMAP-Rule" id="MF_01630"/>
    </source>
</evidence>
<sequence>MKLSRRSFMKANAVAAAAAAAGLSVPGVARAVVGQQEAIKWDKAPCRFCGTGCGVLVGTQQGRVVACQGDPDAPVNRGLNCIKGYFLPKIMYGKDRLTQPLLRMKNGKYDKEGEFTPITWDQAFDVMEEKFKTALKEKGPESIGMFGSGQWTIWEGYAASKLFKAGFRSNNIDPNARHCMASAVVGFMRTFGMDEPMGCYDDIEQADAFVLWGANMAEMHPILWSRITNRRLSNQNVTVAVLSTYQHRSFELADNGIIFTPQSDLVILNYIANYIIQNNAINQDFFSKHVNLRKGATDIGYGLRPTHPLEKAAKNPGSDASEPMSFEDYKAFVAEYTLEKTAEMTGVPKDQLEQLAQLYADPNKKVISYWTMGFNQHTRGVWANNLVYNLHLLTGKISQPGCGPFSLTGQPSACGTAREVGTFAHRLPADMVVTNEKHRDICEKKWNIPSGTIPAKIGLHAVAQDRALKDGKLNVYWTMCTNNMQAGPNINEERMPGWRDPRNFIIVSDPYPTVSALAADLILPTAMWVEKEGAYGNAERRTQFWRQQVQAPGEAKSDLWQLVQFSRRFKTEEVWPEDLLAKKPELRGKTLYEVLYATPEVSKFPVSELAEDQLNDESRELGFYLQKGLFEEYAWFGRGHGHDLAPFDDYHKARGLRWPVVNGKETQWRYSEGNDPYVKAGEGYKFYGKPDGKAVIFALPFEPAAEAPDEEYDLWLSTGRVLEHWHTGSMTRRVPELHRAFPEAVLFIHPLDAKARDLRRGDKVKVVSRRGEVISIVETRGRNRPPQGLVYMPFFDAAQLVNKLTLDATDPLSKETDFKKCAVKLEKV</sequence>
<feature type="signal peptide" description="Tat-type signal" evidence="1">
    <location>
        <begin position="1"/>
        <end position="31"/>
    </location>
</feature>
<feature type="chain" id="PRO_1000215767" description="Periplasmic nitrate reductase" evidence="1">
    <location>
        <begin position="32"/>
        <end position="828"/>
    </location>
</feature>
<feature type="domain" description="4Fe-4S Mo/W bis-MGD-type" evidence="1">
    <location>
        <begin position="39"/>
        <end position="95"/>
    </location>
</feature>
<feature type="binding site" evidence="1">
    <location>
        <position position="46"/>
    </location>
    <ligand>
        <name>[4Fe-4S] cluster</name>
        <dbReference type="ChEBI" id="CHEBI:49883"/>
    </ligand>
</feature>
<feature type="binding site" evidence="1">
    <location>
        <position position="49"/>
    </location>
    <ligand>
        <name>[4Fe-4S] cluster</name>
        <dbReference type="ChEBI" id="CHEBI:49883"/>
    </ligand>
</feature>
<feature type="binding site" evidence="1">
    <location>
        <position position="53"/>
    </location>
    <ligand>
        <name>[4Fe-4S] cluster</name>
        <dbReference type="ChEBI" id="CHEBI:49883"/>
    </ligand>
</feature>
<feature type="binding site" evidence="1">
    <location>
        <position position="81"/>
    </location>
    <ligand>
        <name>[4Fe-4S] cluster</name>
        <dbReference type="ChEBI" id="CHEBI:49883"/>
    </ligand>
</feature>
<feature type="binding site" evidence="1">
    <location>
        <position position="83"/>
    </location>
    <ligand>
        <name>Mo-bis(molybdopterin guanine dinucleotide)</name>
        <dbReference type="ChEBI" id="CHEBI:60539"/>
    </ligand>
</feature>
<feature type="binding site" evidence="1">
    <location>
        <position position="150"/>
    </location>
    <ligand>
        <name>Mo-bis(molybdopterin guanine dinucleotide)</name>
        <dbReference type="ChEBI" id="CHEBI:60539"/>
    </ligand>
</feature>
<feature type="binding site" evidence="1">
    <location>
        <position position="175"/>
    </location>
    <ligand>
        <name>Mo-bis(molybdopterin guanine dinucleotide)</name>
        <dbReference type="ChEBI" id="CHEBI:60539"/>
    </ligand>
</feature>
<feature type="binding site" evidence="1">
    <location>
        <position position="179"/>
    </location>
    <ligand>
        <name>Mo-bis(molybdopterin guanine dinucleotide)</name>
        <dbReference type="ChEBI" id="CHEBI:60539"/>
    </ligand>
</feature>
<feature type="binding site" evidence="1">
    <location>
        <begin position="212"/>
        <end position="219"/>
    </location>
    <ligand>
        <name>Mo-bis(molybdopterin guanine dinucleotide)</name>
        <dbReference type="ChEBI" id="CHEBI:60539"/>
    </ligand>
</feature>
<feature type="binding site" evidence="1">
    <location>
        <begin position="243"/>
        <end position="247"/>
    </location>
    <ligand>
        <name>Mo-bis(molybdopterin guanine dinucleotide)</name>
        <dbReference type="ChEBI" id="CHEBI:60539"/>
    </ligand>
</feature>
<feature type="binding site" evidence="1">
    <location>
        <begin position="262"/>
        <end position="264"/>
    </location>
    <ligand>
        <name>Mo-bis(molybdopterin guanine dinucleotide)</name>
        <dbReference type="ChEBI" id="CHEBI:60539"/>
    </ligand>
</feature>
<feature type="binding site" evidence="1">
    <location>
        <position position="372"/>
    </location>
    <ligand>
        <name>Mo-bis(molybdopterin guanine dinucleotide)</name>
        <dbReference type="ChEBI" id="CHEBI:60539"/>
    </ligand>
</feature>
<feature type="binding site" evidence="1">
    <location>
        <position position="376"/>
    </location>
    <ligand>
        <name>Mo-bis(molybdopterin guanine dinucleotide)</name>
        <dbReference type="ChEBI" id="CHEBI:60539"/>
    </ligand>
</feature>
<feature type="binding site" evidence="1">
    <location>
        <position position="482"/>
    </location>
    <ligand>
        <name>Mo-bis(molybdopterin guanine dinucleotide)</name>
        <dbReference type="ChEBI" id="CHEBI:60539"/>
    </ligand>
</feature>
<feature type="binding site" evidence="1">
    <location>
        <begin position="508"/>
        <end position="509"/>
    </location>
    <ligand>
        <name>Mo-bis(molybdopterin guanine dinucleotide)</name>
        <dbReference type="ChEBI" id="CHEBI:60539"/>
    </ligand>
</feature>
<feature type="binding site" evidence="1">
    <location>
        <position position="531"/>
    </location>
    <ligand>
        <name>Mo-bis(molybdopterin guanine dinucleotide)</name>
        <dbReference type="ChEBI" id="CHEBI:60539"/>
    </ligand>
</feature>
<feature type="binding site" evidence="1">
    <location>
        <position position="558"/>
    </location>
    <ligand>
        <name>Mo-bis(molybdopterin guanine dinucleotide)</name>
        <dbReference type="ChEBI" id="CHEBI:60539"/>
    </ligand>
</feature>
<feature type="binding site" evidence="1">
    <location>
        <begin position="718"/>
        <end position="727"/>
    </location>
    <ligand>
        <name>Mo-bis(molybdopterin guanine dinucleotide)</name>
        <dbReference type="ChEBI" id="CHEBI:60539"/>
    </ligand>
</feature>
<feature type="binding site" evidence="1">
    <location>
        <position position="794"/>
    </location>
    <ligand>
        <name>substrate</name>
    </ligand>
</feature>
<feature type="binding site" evidence="1">
    <location>
        <position position="802"/>
    </location>
    <ligand>
        <name>Mo-bis(molybdopterin guanine dinucleotide)</name>
        <dbReference type="ChEBI" id="CHEBI:60539"/>
    </ligand>
</feature>
<feature type="binding site" evidence="1">
    <location>
        <position position="819"/>
    </location>
    <ligand>
        <name>Mo-bis(molybdopterin guanine dinucleotide)</name>
        <dbReference type="ChEBI" id="CHEBI:60539"/>
    </ligand>
</feature>
<reference key="1">
    <citation type="journal article" date="2009" name="J. Bacteriol.">
        <title>Genomic sequencing reveals regulatory mutations and recombinational events in the widely used MC4100 lineage of Escherichia coli K-12.</title>
        <authorList>
            <person name="Ferenci T."/>
            <person name="Zhou Z."/>
            <person name="Betteridge T."/>
            <person name="Ren Y."/>
            <person name="Liu Y."/>
            <person name="Feng L."/>
            <person name="Reeves P.R."/>
            <person name="Wang L."/>
        </authorList>
    </citation>
    <scope>NUCLEOTIDE SEQUENCE [LARGE SCALE GENOMIC DNA]</scope>
    <source>
        <strain>K12 / MC4100 / BW2952</strain>
    </source>
</reference>
<proteinExistence type="inferred from homology"/>